<name>DPO4_ACTPJ</name>
<gene>
    <name evidence="1" type="primary">dinB</name>
    <name type="ordered locus">APJL_1058</name>
</gene>
<dbReference type="EC" id="2.7.7.7" evidence="1"/>
<dbReference type="EMBL" id="CP000687">
    <property type="protein sequence ID" value="ABY69614.1"/>
    <property type="molecule type" value="Genomic_DNA"/>
</dbReference>
<dbReference type="RefSeq" id="WP_005597839.1">
    <property type="nucleotide sequence ID" value="NC_010278.1"/>
</dbReference>
<dbReference type="SMR" id="B0BPX9"/>
<dbReference type="GeneID" id="48599267"/>
<dbReference type="KEGG" id="apj:APJL_1058"/>
<dbReference type="HOGENOM" id="CLU_012348_1_2_6"/>
<dbReference type="Proteomes" id="UP000008547">
    <property type="component" value="Chromosome"/>
</dbReference>
<dbReference type="GO" id="GO:0005829">
    <property type="term" value="C:cytosol"/>
    <property type="evidence" value="ECO:0007669"/>
    <property type="project" value="TreeGrafter"/>
</dbReference>
<dbReference type="GO" id="GO:0003684">
    <property type="term" value="F:damaged DNA binding"/>
    <property type="evidence" value="ECO:0007669"/>
    <property type="project" value="InterPro"/>
</dbReference>
<dbReference type="GO" id="GO:0003887">
    <property type="term" value="F:DNA-directed DNA polymerase activity"/>
    <property type="evidence" value="ECO:0007669"/>
    <property type="project" value="UniProtKB-UniRule"/>
</dbReference>
<dbReference type="GO" id="GO:0000287">
    <property type="term" value="F:magnesium ion binding"/>
    <property type="evidence" value="ECO:0007669"/>
    <property type="project" value="UniProtKB-UniRule"/>
</dbReference>
<dbReference type="GO" id="GO:0006261">
    <property type="term" value="P:DNA-templated DNA replication"/>
    <property type="evidence" value="ECO:0007669"/>
    <property type="project" value="UniProtKB-UniRule"/>
</dbReference>
<dbReference type="GO" id="GO:0042276">
    <property type="term" value="P:error-prone translesion synthesis"/>
    <property type="evidence" value="ECO:0007669"/>
    <property type="project" value="TreeGrafter"/>
</dbReference>
<dbReference type="GO" id="GO:0009432">
    <property type="term" value="P:SOS response"/>
    <property type="evidence" value="ECO:0007669"/>
    <property type="project" value="TreeGrafter"/>
</dbReference>
<dbReference type="CDD" id="cd03586">
    <property type="entry name" value="PolY_Pol_IV_kappa"/>
    <property type="match status" value="1"/>
</dbReference>
<dbReference type="FunFam" id="1.10.150.20:FF:000019">
    <property type="entry name" value="DNA polymerase IV"/>
    <property type="match status" value="1"/>
</dbReference>
<dbReference type="FunFam" id="3.40.1170.60:FF:000001">
    <property type="entry name" value="DNA polymerase IV"/>
    <property type="match status" value="1"/>
</dbReference>
<dbReference type="Gene3D" id="3.30.70.270">
    <property type="match status" value="1"/>
</dbReference>
<dbReference type="Gene3D" id="3.40.1170.60">
    <property type="match status" value="1"/>
</dbReference>
<dbReference type="Gene3D" id="1.10.150.20">
    <property type="entry name" value="5' to 3' exonuclease, C-terminal subdomain"/>
    <property type="match status" value="1"/>
</dbReference>
<dbReference type="Gene3D" id="3.30.1490.100">
    <property type="entry name" value="DNA polymerase, Y-family, little finger domain"/>
    <property type="match status" value="1"/>
</dbReference>
<dbReference type="HAMAP" id="MF_01113">
    <property type="entry name" value="DNApol_IV"/>
    <property type="match status" value="1"/>
</dbReference>
<dbReference type="InterPro" id="IPR043502">
    <property type="entry name" value="DNA/RNA_pol_sf"/>
</dbReference>
<dbReference type="InterPro" id="IPR036775">
    <property type="entry name" value="DNA_pol_Y-fam_lit_finger_sf"/>
</dbReference>
<dbReference type="InterPro" id="IPR017961">
    <property type="entry name" value="DNA_pol_Y-fam_little_finger"/>
</dbReference>
<dbReference type="InterPro" id="IPR050116">
    <property type="entry name" value="DNA_polymerase-Y"/>
</dbReference>
<dbReference type="InterPro" id="IPR022880">
    <property type="entry name" value="DNApol_IV"/>
</dbReference>
<dbReference type="InterPro" id="IPR053848">
    <property type="entry name" value="IMS_HHH_1"/>
</dbReference>
<dbReference type="InterPro" id="IPR043128">
    <property type="entry name" value="Rev_trsase/Diguanyl_cyclase"/>
</dbReference>
<dbReference type="InterPro" id="IPR001126">
    <property type="entry name" value="UmuC"/>
</dbReference>
<dbReference type="NCBIfam" id="NF002677">
    <property type="entry name" value="PRK02406.1"/>
    <property type="match status" value="1"/>
</dbReference>
<dbReference type="PANTHER" id="PTHR11076:SF33">
    <property type="entry name" value="DNA POLYMERASE KAPPA"/>
    <property type="match status" value="1"/>
</dbReference>
<dbReference type="PANTHER" id="PTHR11076">
    <property type="entry name" value="DNA REPAIR POLYMERASE UMUC / TRANSFERASE FAMILY MEMBER"/>
    <property type="match status" value="1"/>
</dbReference>
<dbReference type="Pfam" id="PF00817">
    <property type="entry name" value="IMS"/>
    <property type="match status" value="1"/>
</dbReference>
<dbReference type="Pfam" id="PF11799">
    <property type="entry name" value="IMS_C"/>
    <property type="match status" value="1"/>
</dbReference>
<dbReference type="Pfam" id="PF21999">
    <property type="entry name" value="IMS_HHH_1"/>
    <property type="match status" value="1"/>
</dbReference>
<dbReference type="SUPFAM" id="SSF56672">
    <property type="entry name" value="DNA/RNA polymerases"/>
    <property type="match status" value="1"/>
</dbReference>
<dbReference type="SUPFAM" id="SSF100879">
    <property type="entry name" value="Lesion bypass DNA polymerase (Y-family), little finger domain"/>
    <property type="match status" value="1"/>
</dbReference>
<dbReference type="PROSITE" id="PS50173">
    <property type="entry name" value="UMUC"/>
    <property type="match status" value="1"/>
</dbReference>
<organism>
    <name type="scientific">Actinobacillus pleuropneumoniae serotype 3 (strain JL03)</name>
    <dbReference type="NCBI Taxonomy" id="434271"/>
    <lineage>
        <taxon>Bacteria</taxon>
        <taxon>Pseudomonadati</taxon>
        <taxon>Pseudomonadota</taxon>
        <taxon>Gammaproteobacteria</taxon>
        <taxon>Pasteurellales</taxon>
        <taxon>Pasteurellaceae</taxon>
        <taxon>Actinobacillus</taxon>
    </lineage>
</organism>
<comment type="function">
    <text evidence="1">Poorly processive, error-prone DNA polymerase involved in untargeted mutagenesis. Copies undamaged DNA at stalled replication forks, which arise in vivo from mismatched or misaligned primer ends. These misaligned primers can be extended by PolIV. Exhibits no 3'-5' exonuclease (proofreading) activity. May be involved in translesional synthesis, in conjunction with the beta clamp from PolIII.</text>
</comment>
<comment type="catalytic activity">
    <reaction evidence="1">
        <text>DNA(n) + a 2'-deoxyribonucleoside 5'-triphosphate = DNA(n+1) + diphosphate</text>
        <dbReference type="Rhea" id="RHEA:22508"/>
        <dbReference type="Rhea" id="RHEA-COMP:17339"/>
        <dbReference type="Rhea" id="RHEA-COMP:17340"/>
        <dbReference type="ChEBI" id="CHEBI:33019"/>
        <dbReference type="ChEBI" id="CHEBI:61560"/>
        <dbReference type="ChEBI" id="CHEBI:173112"/>
        <dbReference type="EC" id="2.7.7.7"/>
    </reaction>
</comment>
<comment type="cofactor">
    <cofactor evidence="1">
        <name>Mg(2+)</name>
        <dbReference type="ChEBI" id="CHEBI:18420"/>
    </cofactor>
    <text evidence="1">Binds 2 magnesium ions per subunit.</text>
</comment>
<comment type="subunit">
    <text evidence="1">Monomer.</text>
</comment>
<comment type="subcellular location">
    <subcellularLocation>
        <location evidence="1">Cytoplasm</location>
    </subcellularLocation>
</comment>
<comment type="similarity">
    <text evidence="1">Belongs to the DNA polymerase type-Y family.</text>
</comment>
<feature type="chain" id="PRO_1000137124" description="DNA polymerase IV">
    <location>
        <begin position="1"/>
        <end position="356"/>
    </location>
</feature>
<feature type="domain" description="UmuC" evidence="1">
    <location>
        <begin position="7"/>
        <end position="188"/>
    </location>
</feature>
<feature type="active site" evidence="1">
    <location>
        <position position="107"/>
    </location>
</feature>
<feature type="binding site" evidence="1">
    <location>
        <position position="11"/>
    </location>
    <ligand>
        <name>Mg(2+)</name>
        <dbReference type="ChEBI" id="CHEBI:18420"/>
    </ligand>
</feature>
<feature type="binding site" evidence="1">
    <location>
        <position position="106"/>
    </location>
    <ligand>
        <name>Mg(2+)</name>
        <dbReference type="ChEBI" id="CHEBI:18420"/>
    </ligand>
</feature>
<feature type="site" description="Substrate discrimination" evidence="1">
    <location>
        <position position="16"/>
    </location>
</feature>
<accession>B0BPX9</accession>
<sequence length="356" mass="40721">MATQRKIIHIDMDCFYAAIEMRENPALIGKPVAVGGSVEGRGVLTTCNYEARKFGLHSAMPTAQALKRCPNLILVPVNMPLYKAVSEQIHQIFRRYTDIVEPLSLDEAYLDVTDCRQCSGSATWIAQEIRDAIWNELHLTASAGIAPLKFLAKIVSDQNKPNGQFVISPENMTAFIYDLPLKKIPGVGKVTNEKLAQLGLHTCGDIQHSDKAFIYKTFGKFGQRLWEFSHAIDNRKIEANRPRKSLAVENTLPTDIWHLAEAEQIVDELFKKLVFRLQRNWGERSLQEFKKLAIKLKFGDFTQTTLERTTDGLSRERFIELLQQVWQRTNRRSVRLIGLSVHYPTEKVKKQLNLWE</sequence>
<reference key="1">
    <citation type="journal article" date="2008" name="PLoS ONE">
        <title>Genome biology of Actinobacillus pleuropneumoniae JL03, an isolate of serotype 3 prevalent in China.</title>
        <authorList>
            <person name="Xu Z."/>
            <person name="Zhou Y."/>
            <person name="Li L."/>
            <person name="Zhou R."/>
            <person name="Xiao S."/>
            <person name="Wan Y."/>
            <person name="Zhang S."/>
            <person name="Wang K."/>
            <person name="Li W."/>
            <person name="Li L."/>
            <person name="Jin H."/>
            <person name="Kang M."/>
            <person name="Dalai B."/>
            <person name="Li T."/>
            <person name="Liu L."/>
            <person name="Cheng Y."/>
            <person name="Zhang L."/>
            <person name="Xu T."/>
            <person name="Zheng H."/>
            <person name="Pu S."/>
            <person name="Wang B."/>
            <person name="Gu W."/>
            <person name="Zhang X.L."/>
            <person name="Zhu G.-F."/>
            <person name="Wang S."/>
            <person name="Zhao G.-P."/>
            <person name="Chen H."/>
        </authorList>
    </citation>
    <scope>NUCLEOTIDE SEQUENCE [LARGE SCALE GENOMIC DNA]</scope>
    <source>
        <strain>JL03</strain>
    </source>
</reference>
<evidence type="ECO:0000255" key="1">
    <source>
        <dbReference type="HAMAP-Rule" id="MF_01113"/>
    </source>
</evidence>
<keyword id="KW-0963">Cytoplasm</keyword>
<keyword id="KW-0227">DNA damage</keyword>
<keyword id="KW-0234">DNA repair</keyword>
<keyword id="KW-0235">DNA replication</keyword>
<keyword id="KW-0238">DNA-binding</keyword>
<keyword id="KW-0239">DNA-directed DNA polymerase</keyword>
<keyword id="KW-0460">Magnesium</keyword>
<keyword id="KW-0479">Metal-binding</keyword>
<keyword id="KW-0515">Mutator protein</keyword>
<keyword id="KW-0548">Nucleotidyltransferase</keyword>
<keyword id="KW-0808">Transferase</keyword>
<proteinExistence type="inferred from homology"/>
<protein>
    <recommendedName>
        <fullName evidence="1">DNA polymerase IV</fullName>
        <shortName evidence="1">Pol IV</shortName>
        <ecNumber evidence="1">2.7.7.7</ecNumber>
    </recommendedName>
</protein>